<proteinExistence type="inferred from homology"/>
<sequence>MSIEIEAELQTAVDKRRNFAIISHPDAGKTTLTEKLLLYGGAIQEAGAVKAKRAQRHATSDWMAMEQQRGISITSTVLQFDYQNCQINLLDTPGHQDFSEDTYRTLAAADNAVMLEDSAKGLEPQTRKLFEVCKMRKLPIFTFINKMDRPGREPLELLDEIEQELGLKTYPVNWPIGMGDRFKGVFDRRKEQIHLFERSIHGRKAAVNTVVNLGDPQIEKLLDQDLYYQLKEDLELLDELGSALDLEQIHTGEMTPVFFGSAMTNFGVQLFLDAFLEYALKPGIHKSTVGEVSPTYPNFTGFVFKLQANMDPKHRDRVAFIRVCTGKFEKDMTVSHARTGKTVRLSRPQKLFAQDRASIENAYPGDIIGLNNPGVFAIGDTIYNGKKIEYEGIPCFSPEIFAYLRNPNPSKFKQFRKGVNELREEGAVQIMYSADEAKRDPILAAVGQLQLEVVQFRMQNEYGVETRVEMLPFTVARWVDGGWEILQKVGRLFNTVAVKDSWGRPVLLFKNQWNCQQVESEHPELKLNNTAPVVSGQEPESL</sequence>
<accession>Q110K2</accession>
<protein>
    <recommendedName>
        <fullName evidence="1">Peptide chain release factor 3</fullName>
        <shortName evidence="1">RF-3</shortName>
    </recommendedName>
</protein>
<comment type="function">
    <text evidence="1">Increases the formation of ribosomal termination complexes and stimulates activities of RF-1 and RF-2. It binds guanine nucleotides and has strong preference for UGA stop codons. It may interact directly with the ribosome. The stimulation of RF-1 and RF-2 is significantly reduced by GTP and GDP, but not by GMP.</text>
</comment>
<comment type="subcellular location">
    <subcellularLocation>
        <location evidence="1">Cytoplasm</location>
    </subcellularLocation>
</comment>
<comment type="similarity">
    <text evidence="1">Belongs to the TRAFAC class translation factor GTPase superfamily. Classic translation factor GTPase family. PrfC subfamily.</text>
</comment>
<keyword id="KW-0963">Cytoplasm</keyword>
<keyword id="KW-0342">GTP-binding</keyword>
<keyword id="KW-0547">Nucleotide-binding</keyword>
<keyword id="KW-0648">Protein biosynthesis</keyword>
<evidence type="ECO:0000255" key="1">
    <source>
        <dbReference type="HAMAP-Rule" id="MF_00072"/>
    </source>
</evidence>
<reference key="1">
    <citation type="journal article" date="2015" name="Proc. Natl. Acad. Sci. U.S.A.">
        <title>Trichodesmium genome maintains abundant, widespread noncoding DNA in situ, despite oligotrophic lifestyle.</title>
        <authorList>
            <person name="Walworth N."/>
            <person name="Pfreundt U."/>
            <person name="Nelson W.C."/>
            <person name="Mincer T."/>
            <person name="Heidelberg J.F."/>
            <person name="Fu F."/>
            <person name="Waterbury J.B."/>
            <person name="Glavina del Rio T."/>
            <person name="Goodwin L."/>
            <person name="Kyrpides N.C."/>
            <person name="Land M.L."/>
            <person name="Woyke T."/>
            <person name="Hutchins D.A."/>
            <person name="Hess W.R."/>
            <person name="Webb E.A."/>
        </authorList>
    </citation>
    <scope>NUCLEOTIDE SEQUENCE [LARGE SCALE GENOMIC DNA]</scope>
    <source>
        <strain>IMS101</strain>
    </source>
</reference>
<organism>
    <name type="scientific">Trichodesmium erythraeum (strain IMS101)</name>
    <dbReference type="NCBI Taxonomy" id="203124"/>
    <lineage>
        <taxon>Bacteria</taxon>
        <taxon>Bacillati</taxon>
        <taxon>Cyanobacteriota</taxon>
        <taxon>Cyanophyceae</taxon>
        <taxon>Oscillatoriophycideae</taxon>
        <taxon>Oscillatoriales</taxon>
        <taxon>Microcoleaceae</taxon>
        <taxon>Trichodesmium</taxon>
    </lineage>
</organism>
<name>RF3_TRIEI</name>
<dbReference type="EMBL" id="CP000393">
    <property type="protein sequence ID" value="ABG52072.1"/>
    <property type="molecule type" value="Genomic_DNA"/>
</dbReference>
<dbReference type="RefSeq" id="WP_011612431.1">
    <property type="nucleotide sequence ID" value="NC_008312.1"/>
</dbReference>
<dbReference type="SMR" id="Q110K2"/>
<dbReference type="STRING" id="203124.Tery_2904"/>
<dbReference type="KEGG" id="ter:Tery_2904"/>
<dbReference type="eggNOG" id="COG4108">
    <property type="taxonomic scope" value="Bacteria"/>
</dbReference>
<dbReference type="HOGENOM" id="CLU_002794_2_1_3"/>
<dbReference type="OrthoDB" id="9804431at2"/>
<dbReference type="GO" id="GO:0005829">
    <property type="term" value="C:cytosol"/>
    <property type="evidence" value="ECO:0007669"/>
    <property type="project" value="TreeGrafter"/>
</dbReference>
<dbReference type="GO" id="GO:0005525">
    <property type="term" value="F:GTP binding"/>
    <property type="evidence" value="ECO:0007669"/>
    <property type="project" value="UniProtKB-UniRule"/>
</dbReference>
<dbReference type="GO" id="GO:0003924">
    <property type="term" value="F:GTPase activity"/>
    <property type="evidence" value="ECO:0007669"/>
    <property type="project" value="InterPro"/>
</dbReference>
<dbReference type="GO" id="GO:0016150">
    <property type="term" value="F:translation release factor activity, codon nonspecific"/>
    <property type="evidence" value="ECO:0007669"/>
    <property type="project" value="TreeGrafter"/>
</dbReference>
<dbReference type="GO" id="GO:0016149">
    <property type="term" value="F:translation release factor activity, codon specific"/>
    <property type="evidence" value="ECO:0007669"/>
    <property type="project" value="UniProtKB-UniRule"/>
</dbReference>
<dbReference type="GO" id="GO:0006449">
    <property type="term" value="P:regulation of translational termination"/>
    <property type="evidence" value="ECO:0007669"/>
    <property type="project" value="UniProtKB-UniRule"/>
</dbReference>
<dbReference type="CDD" id="cd04169">
    <property type="entry name" value="RF3"/>
    <property type="match status" value="1"/>
</dbReference>
<dbReference type="CDD" id="cd03689">
    <property type="entry name" value="RF3_II"/>
    <property type="match status" value="1"/>
</dbReference>
<dbReference type="FunFam" id="3.30.70.3280:FF:000001">
    <property type="entry name" value="Peptide chain release factor 3"/>
    <property type="match status" value="1"/>
</dbReference>
<dbReference type="FunFam" id="3.40.50.300:FF:000542">
    <property type="entry name" value="Peptide chain release factor 3"/>
    <property type="match status" value="1"/>
</dbReference>
<dbReference type="Gene3D" id="3.40.50.300">
    <property type="entry name" value="P-loop containing nucleotide triphosphate hydrolases"/>
    <property type="match status" value="1"/>
</dbReference>
<dbReference type="Gene3D" id="3.30.70.3280">
    <property type="entry name" value="Peptide chain release factor 3, domain III"/>
    <property type="match status" value="1"/>
</dbReference>
<dbReference type="Gene3D" id="2.40.30.10">
    <property type="entry name" value="Translation factors"/>
    <property type="match status" value="1"/>
</dbReference>
<dbReference type="HAMAP" id="MF_00072">
    <property type="entry name" value="Rel_fac_3"/>
    <property type="match status" value="1"/>
</dbReference>
<dbReference type="InterPro" id="IPR053905">
    <property type="entry name" value="EF-G-like_DII"/>
</dbReference>
<dbReference type="InterPro" id="IPR035647">
    <property type="entry name" value="EFG_III/V"/>
</dbReference>
<dbReference type="InterPro" id="IPR031157">
    <property type="entry name" value="G_TR_CS"/>
</dbReference>
<dbReference type="InterPro" id="IPR027417">
    <property type="entry name" value="P-loop_NTPase"/>
</dbReference>
<dbReference type="InterPro" id="IPR004548">
    <property type="entry name" value="PrfC"/>
</dbReference>
<dbReference type="InterPro" id="IPR032090">
    <property type="entry name" value="RF3_C"/>
</dbReference>
<dbReference type="InterPro" id="IPR038467">
    <property type="entry name" value="RF3_dom_3_sf"/>
</dbReference>
<dbReference type="InterPro" id="IPR041732">
    <property type="entry name" value="RF3_GTP-bd"/>
</dbReference>
<dbReference type="InterPro" id="IPR005225">
    <property type="entry name" value="Small_GTP-bd"/>
</dbReference>
<dbReference type="InterPro" id="IPR000795">
    <property type="entry name" value="T_Tr_GTP-bd_dom"/>
</dbReference>
<dbReference type="InterPro" id="IPR009000">
    <property type="entry name" value="Transl_B-barrel_sf"/>
</dbReference>
<dbReference type="NCBIfam" id="TIGR00503">
    <property type="entry name" value="prfC"/>
    <property type="match status" value="1"/>
</dbReference>
<dbReference type="NCBIfam" id="NF001964">
    <property type="entry name" value="PRK00741.1"/>
    <property type="match status" value="1"/>
</dbReference>
<dbReference type="NCBIfam" id="TIGR00231">
    <property type="entry name" value="small_GTP"/>
    <property type="match status" value="1"/>
</dbReference>
<dbReference type="PANTHER" id="PTHR43556">
    <property type="entry name" value="PEPTIDE CHAIN RELEASE FACTOR RF3"/>
    <property type="match status" value="1"/>
</dbReference>
<dbReference type="PANTHER" id="PTHR43556:SF2">
    <property type="entry name" value="PEPTIDE CHAIN RELEASE FACTOR RF3"/>
    <property type="match status" value="1"/>
</dbReference>
<dbReference type="Pfam" id="PF22042">
    <property type="entry name" value="EF-G_D2"/>
    <property type="match status" value="1"/>
</dbReference>
<dbReference type="Pfam" id="PF00009">
    <property type="entry name" value="GTP_EFTU"/>
    <property type="match status" value="1"/>
</dbReference>
<dbReference type="Pfam" id="PF16658">
    <property type="entry name" value="RF3_C"/>
    <property type="match status" value="1"/>
</dbReference>
<dbReference type="PRINTS" id="PR00315">
    <property type="entry name" value="ELONGATNFCT"/>
</dbReference>
<dbReference type="SUPFAM" id="SSF54980">
    <property type="entry name" value="EF-G C-terminal domain-like"/>
    <property type="match status" value="1"/>
</dbReference>
<dbReference type="SUPFAM" id="SSF52540">
    <property type="entry name" value="P-loop containing nucleoside triphosphate hydrolases"/>
    <property type="match status" value="1"/>
</dbReference>
<dbReference type="SUPFAM" id="SSF50447">
    <property type="entry name" value="Translation proteins"/>
    <property type="match status" value="1"/>
</dbReference>
<dbReference type="PROSITE" id="PS00301">
    <property type="entry name" value="G_TR_1"/>
    <property type="match status" value="1"/>
</dbReference>
<dbReference type="PROSITE" id="PS51722">
    <property type="entry name" value="G_TR_2"/>
    <property type="match status" value="1"/>
</dbReference>
<feature type="chain" id="PRO_1000023694" description="Peptide chain release factor 3">
    <location>
        <begin position="1"/>
        <end position="542"/>
    </location>
</feature>
<feature type="domain" description="tr-type G">
    <location>
        <begin position="14"/>
        <end position="283"/>
    </location>
</feature>
<feature type="binding site" evidence="1">
    <location>
        <begin position="23"/>
        <end position="30"/>
    </location>
    <ligand>
        <name>GTP</name>
        <dbReference type="ChEBI" id="CHEBI:37565"/>
    </ligand>
</feature>
<feature type="binding site" evidence="1">
    <location>
        <begin position="91"/>
        <end position="95"/>
    </location>
    <ligand>
        <name>GTP</name>
        <dbReference type="ChEBI" id="CHEBI:37565"/>
    </ligand>
</feature>
<feature type="binding site" evidence="1">
    <location>
        <begin position="145"/>
        <end position="148"/>
    </location>
    <ligand>
        <name>GTP</name>
        <dbReference type="ChEBI" id="CHEBI:37565"/>
    </ligand>
</feature>
<gene>
    <name evidence="1" type="primary">prfC</name>
    <name type="ordered locus">Tery_2904</name>
</gene>